<evidence type="ECO:0000255" key="1">
    <source>
        <dbReference type="HAMAP-Rule" id="MF_01390"/>
    </source>
</evidence>
<keyword id="KW-0150">Chloroplast</keyword>
<keyword id="KW-0507">mRNA processing</keyword>
<keyword id="KW-0934">Plastid</keyword>
<keyword id="KW-0694">RNA-binding</keyword>
<keyword id="KW-0819">tRNA processing</keyword>
<feature type="chain" id="PRO_0000143794" description="Maturase K">
    <location>
        <begin position="1"/>
        <end position="514"/>
    </location>
</feature>
<organism>
    <name type="scientific">Zamia integrifolia</name>
    <name type="common">Coontie</name>
    <name type="synonym">Zamia floridana</name>
    <dbReference type="NCBI Taxonomy" id="3305"/>
    <lineage>
        <taxon>Eukaryota</taxon>
        <taxon>Viridiplantae</taxon>
        <taxon>Streptophyta</taxon>
        <taxon>Embryophyta</taxon>
        <taxon>Tracheophyta</taxon>
        <taxon>Spermatophyta</taxon>
        <taxon>Cycadidae</taxon>
        <taxon>Cycadales</taxon>
        <taxon>Zamiaceae</taxon>
        <taxon>Zamia</taxon>
    </lineage>
</organism>
<gene>
    <name evidence="1" type="primary">matK</name>
</gene>
<geneLocation type="chloroplast"/>
<proteinExistence type="inferred from homology"/>
<protein>
    <recommendedName>
        <fullName evidence="1">Maturase K</fullName>
    </recommendedName>
    <alternativeName>
        <fullName evidence="1">Intron maturase</fullName>
    </alternativeName>
</protein>
<sequence>MDKFQRDGKEYTSRQRRFLYPFLFKEDLYAIAIDHYFNRSSSFEPMENSSSNDRFSFLTVKRSISRMRQQNGSIVPFVNCNQKKLVGYNRSFYSELVLGGLTAVPEVPFSIRSKHSLEGMNEWTSFRSINSIFPLMEDKIPHSNFILDIRIPHLTHPEILVRTFRRWIQDAPFLHSLRFVLHEHRNLIISSNLDQLILIASKENTRLSLFLWNSYAYECESLLVPLWKRFSHSRSLPYESFVERTPFCRKIEHIIIFSHKYLKKSLWFLKDPSIHYVKYRERSIIALRGTYLLVKKWRYHLTNFWQCHFHLWLQPYRIYIDELSNNCFSFLGYLLSVKMNTSVVRIKMLDDSFITDLITKEFDPIAPTTLLIGSLAKEKFCDISGHPISRLAWTGLTDDDILDRFDRIWRNIFHYYSGSSKKDGLYRMKYILRLPCAKTLACKHKSAIRVVRERFGSELFTKSFPKERESIFLSFSKTRSQRERIWHSDIIQRNPLVNSWWKKHNFQIEPLFDR</sequence>
<reference key="1">
    <citation type="submission" date="2000-06" db="EMBL/GenBank/DDBJ databases">
        <title>Chloroplast matK sequence data reconfirm the monophyly of extant gymnosperms and the coniferophytic origin of Gnetales.</title>
        <authorList>
            <person name="Chaw S.-M."/>
            <person name="Hu S.-H."/>
        </authorList>
    </citation>
    <scope>NUCLEOTIDE SEQUENCE [GENOMIC DNA]</scope>
</reference>
<dbReference type="EMBL" id="AF279804">
    <property type="protein sequence ID" value="AAK69127.1"/>
    <property type="molecule type" value="Genomic_DNA"/>
</dbReference>
<dbReference type="GO" id="GO:0009507">
    <property type="term" value="C:chloroplast"/>
    <property type="evidence" value="ECO:0007669"/>
    <property type="project" value="UniProtKB-SubCell"/>
</dbReference>
<dbReference type="GO" id="GO:0003723">
    <property type="term" value="F:RNA binding"/>
    <property type="evidence" value="ECO:0007669"/>
    <property type="project" value="UniProtKB-KW"/>
</dbReference>
<dbReference type="GO" id="GO:0006397">
    <property type="term" value="P:mRNA processing"/>
    <property type="evidence" value="ECO:0007669"/>
    <property type="project" value="UniProtKB-KW"/>
</dbReference>
<dbReference type="GO" id="GO:0008380">
    <property type="term" value="P:RNA splicing"/>
    <property type="evidence" value="ECO:0007669"/>
    <property type="project" value="UniProtKB-UniRule"/>
</dbReference>
<dbReference type="GO" id="GO:0008033">
    <property type="term" value="P:tRNA processing"/>
    <property type="evidence" value="ECO:0007669"/>
    <property type="project" value="UniProtKB-KW"/>
</dbReference>
<dbReference type="HAMAP" id="MF_01390">
    <property type="entry name" value="MatK"/>
    <property type="match status" value="1"/>
</dbReference>
<dbReference type="InterPro" id="IPR024937">
    <property type="entry name" value="Domain_X"/>
</dbReference>
<dbReference type="InterPro" id="IPR002866">
    <property type="entry name" value="Maturase_MatK"/>
</dbReference>
<dbReference type="InterPro" id="IPR024942">
    <property type="entry name" value="Maturase_MatK_N"/>
</dbReference>
<dbReference type="PANTHER" id="PTHR34811">
    <property type="entry name" value="MATURASE K"/>
    <property type="match status" value="1"/>
</dbReference>
<dbReference type="PANTHER" id="PTHR34811:SF1">
    <property type="entry name" value="MATURASE K"/>
    <property type="match status" value="1"/>
</dbReference>
<dbReference type="Pfam" id="PF01348">
    <property type="entry name" value="Intron_maturas2"/>
    <property type="match status" value="1"/>
</dbReference>
<dbReference type="Pfam" id="PF01824">
    <property type="entry name" value="MatK_N"/>
    <property type="match status" value="1"/>
</dbReference>
<accession>Q8MEX4</accession>
<comment type="function">
    <text evidence="1">Usually encoded in the trnK tRNA gene intron. Probably assists in splicing its own and other chloroplast group II introns.</text>
</comment>
<comment type="subcellular location">
    <subcellularLocation>
        <location>Plastid</location>
        <location>Chloroplast</location>
    </subcellularLocation>
</comment>
<comment type="similarity">
    <text evidence="1">Belongs to the intron maturase 2 family. MatK subfamily.</text>
</comment>
<name>MATK_ZAMIT</name>